<proteinExistence type="evidence at protein level"/>
<keyword id="KW-0010">Activator</keyword>
<keyword id="KW-1015">Disulfide bond</keyword>
<keyword id="KW-0496">Mitochondrion</keyword>
<keyword id="KW-0523">Neurodegeneration</keyword>
<keyword id="KW-0539">Nucleus</keyword>
<keyword id="KW-0907">Parkinson disease</keyword>
<keyword id="KW-0908">Parkinsonism</keyword>
<keyword id="KW-1267">Proteomics identification</keyword>
<keyword id="KW-1185">Reference proteome</keyword>
<keyword id="KW-0804">Transcription</keyword>
<evidence type="ECO:0000255" key="1">
    <source>
        <dbReference type="PROSITE-ProRule" id="PRU01150"/>
    </source>
</evidence>
<evidence type="ECO:0000256" key="2">
    <source>
        <dbReference type="SAM" id="MobiDB-lite"/>
    </source>
</evidence>
<evidence type="ECO:0000269" key="3">
    <source>
    </source>
</evidence>
<evidence type="ECO:0000269" key="4">
    <source>
    </source>
</evidence>
<evidence type="ECO:0000269" key="5">
    <source>
    </source>
</evidence>
<evidence type="ECO:0000269" key="6">
    <source>
    </source>
</evidence>
<evidence type="ECO:0000305" key="7"/>
<accession>Q9Y6H1</accession>
<accession>Q498C3</accession>
<accession>Q6NZ50</accession>
<dbReference type="EMBL" id="AY605046">
    <property type="protein sequence ID" value="AAT35813.1"/>
    <property type="molecule type" value="mRNA"/>
</dbReference>
<dbReference type="EMBL" id="AF078845">
    <property type="protein sequence ID" value="AAD44477.1"/>
    <property type="molecule type" value="mRNA"/>
</dbReference>
<dbReference type="EMBL" id="AY633613">
    <property type="protein sequence ID" value="AAV33306.1"/>
    <property type="molecule type" value="mRNA"/>
</dbReference>
<dbReference type="EMBL" id="AC006970">
    <property type="protein sequence ID" value="AAQ96886.1"/>
    <property type="molecule type" value="Genomic_DNA"/>
</dbReference>
<dbReference type="EMBL" id="BC003079">
    <property type="protein sequence ID" value="AAH03079.1"/>
    <property type="molecule type" value="mRNA"/>
</dbReference>
<dbReference type="EMBL" id="BC015639">
    <property type="protein sequence ID" value="AAH15639.1"/>
    <property type="molecule type" value="mRNA"/>
</dbReference>
<dbReference type="EMBL" id="BC066331">
    <property type="protein sequence ID" value="AAH66331.1"/>
    <property type="molecule type" value="mRNA"/>
</dbReference>
<dbReference type="EMBL" id="BC071985">
    <property type="protein sequence ID" value="AAH71985.1"/>
    <property type="molecule type" value="mRNA"/>
</dbReference>
<dbReference type="EMBL" id="BC100275">
    <property type="protein sequence ID" value="AAI00276.1"/>
    <property type="molecule type" value="mRNA"/>
</dbReference>
<dbReference type="CCDS" id="CCDS5526.1"/>
<dbReference type="RefSeq" id="NP_057223.1">
    <property type="nucleotide sequence ID" value="NM_016139.4"/>
</dbReference>
<dbReference type="SMR" id="Q9Y6H1"/>
<dbReference type="BioGRID" id="119326">
    <property type="interactions" value="260"/>
</dbReference>
<dbReference type="FunCoup" id="Q9Y6H1">
    <property type="interactions" value="1819"/>
</dbReference>
<dbReference type="IntAct" id="Q9Y6H1">
    <property type="interactions" value="225"/>
</dbReference>
<dbReference type="MINT" id="Q9Y6H1"/>
<dbReference type="STRING" id="9606.ENSP00000378812"/>
<dbReference type="iPTMnet" id="Q9Y6H1"/>
<dbReference type="PhosphoSitePlus" id="Q9Y6H1"/>
<dbReference type="BioMuta" id="CHCHD2"/>
<dbReference type="DMDM" id="62510521"/>
<dbReference type="jPOST" id="Q9Y6H1"/>
<dbReference type="MassIVE" id="Q9Y6H1"/>
<dbReference type="PaxDb" id="9606-ENSP00000378812"/>
<dbReference type="PeptideAtlas" id="Q9Y6H1"/>
<dbReference type="ProteomicsDB" id="86678"/>
<dbReference type="Pumba" id="Q9Y6H1"/>
<dbReference type="TopDownProteomics" id="Q9Y6H1"/>
<dbReference type="Antibodypedia" id="44807">
    <property type="antibodies" value="140 antibodies from 27 providers"/>
</dbReference>
<dbReference type="DNASU" id="51142"/>
<dbReference type="Ensembl" id="ENST00000395422.4">
    <property type="protein sequence ID" value="ENSP00000378812.3"/>
    <property type="gene ID" value="ENSG00000106153.14"/>
</dbReference>
<dbReference type="GeneID" id="51142"/>
<dbReference type="KEGG" id="hsa:51142"/>
<dbReference type="MANE-Select" id="ENST00000395422.4">
    <property type="protein sequence ID" value="ENSP00000378812.3"/>
    <property type="RefSeq nucleotide sequence ID" value="NM_016139.4"/>
    <property type="RefSeq protein sequence ID" value="NP_057223.1"/>
</dbReference>
<dbReference type="UCSC" id="uc003tsa.4">
    <property type="organism name" value="human"/>
</dbReference>
<dbReference type="AGR" id="HGNC:21645"/>
<dbReference type="CTD" id="51142"/>
<dbReference type="DisGeNET" id="51142"/>
<dbReference type="GeneCards" id="CHCHD2"/>
<dbReference type="HGNC" id="HGNC:21645">
    <property type="gene designation" value="CHCHD2"/>
</dbReference>
<dbReference type="HPA" id="ENSG00000106153">
    <property type="expression patterns" value="Low tissue specificity"/>
</dbReference>
<dbReference type="MalaCards" id="CHCHD2"/>
<dbReference type="MIM" id="616244">
    <property type="type" value="gene"/>
</dbReference>
<dbReference type="MIM" id="616710">
    <property type="type" value="phenotype"/>
</dbReference>
<dbReference type="neXtProt" id="NX_Q9Y6H1"/>
<dbReference type="OpenTargets" id="ENSG00000106153"/>
<dbReference type="PharmGKB" id="PA134974636"/>
<dbReference type="VEuPathDB" id="HostDB:ENSG00000106153"/>
<dbReference type="eggNOG" id="KOG4090">
    <property type="taxonomic scope" value="Eukaryota"/>
</dbReference>
<dbReference type="GeneTree" id="ENSGT00440000038159"/>
<dbReference type="HOGENOM" id="CLU_093520_2_2_1"/>
<dbReference type="InParanoid" id="Q9Y6H1"/>
<dbReference type="OMA" id="CDADARN"/>
<dbReference type="OrthoDB" id="1106148at2759"/>
<dbReference type="PAN-GO" id="Q9Y6H1">
    <property type="GO annotations" value="5 GO annotations based on evolutionary models"/>
</dbReference>
<dbReference type="PhylomeDB" id="Q9Y6H1"/>
<dbReference type="TreeFam" id="TF318060"/>
<dbReference type="PathwayCommons" id="Q9Y6H1"/>
<dbReference type="Reactome" id="R-HSA-1268020">
    <property type="pathway name" value="Mitochondrial protein import"/>
</dbReference>
<dbReference type="Reactome" id="R-HSA-9837999">
    <property type="pathway name" value="Mitochondrial protein degradation"/>
</dbReference>
<dbReference type="SignaLink" id="Q9Y6H1"/>
<dbReference type="BioGRID-ORCS" id="51142">
    <property type="hits" value="119 hits in 1157 CRISPR screens"/>
</dbReference>
<dbReference type="ChiTaRS" id="CHCHD2">
    <property type="organism name" value="human"/>
</dbReference>
<dbReference type="GenomeRNAi" id="51142"/>
<dbReference type="Pharos" id="Q9Y6H1">
    <property type="development level" value="Tbio"/>
</dbReference>
<dbReference type="PRO" id="PR:Q9Y6H1"/>
<dbReference type="Proteomes" id="UP000005640">
    <property type="component" value="Chromosome 7"/>
</dbReference>
<dbReference type="RNAct" id="Q9Y6H1">
    <property type="molecule type" value="protein"/>
</dbReference>
<dbReference type="Bgee" id="ENSG00000106153">
    <property type="expression patterns" value="Expressed in right adrenal gland cortex and 146 other cell types or tissues"/>
</dbReference>
<dbReference type="GO" id="GO:0005758">
    <property type="term" value="C:mitochondrial intermembrane space"/>
    <property type="evidence" value="ECO:0000314"/>
    <property type="project" value="UniProtKB"/>
</dbReference>
<dbReference type="GO" id="GO:0005739">
    <property type="term" value="C:mitochondrion"/>
    <property type="evidence" value="ECO:0000314"/>
    <property type="project" value="UniProtKB"/>
</dbReference>
<dbReference type="GO" id="GO:0005634">
    <property type="term" value="C:nucleus"/>
    <property type="evidence" value="ECO:0000314"/>
    <property type="project" value="UniProtKB"/>
</dbReference>
<dbReference type="GO" id="GO:0140297">
    <property type="term" value="F:DNA-binding transcription factor binding"/>
    <property type="evidence" value="ECO:0000314"/>
    <property type="project" value="UniProtKB"/>
</dbReference>
<dbReference type="GO" id="GO:0043565">
    <property type="term" value="F:sequence-specific DNA binding"/>
    <property type="evidence" value="ECO:0000314"/>
    <property type="project" value="UniProtKB"/>
</dbReference>
<dbReference type="GO" id="GO:0034599">
    <property type="term" value="P:cellular response to oxidative stress"/>
    <property type="evidence" value="ECO:0000316"/>
    <property type="project" value="FlyBase"/>
</dbReference>
<dbReference type="GO" id="GO:0007005">
    <property type="term" value="P:mitochondrion organization"/>
    <property type="evidence" value="ECO:0000318"/>
    <property type="project" value="GO_Central"/>
</dbReference>
<dbReference type="GO" id="GO:1905448">
    <property type="term" value="P:positive regulation of mitochondrial ATP synthesis coupled electron transport"/>
    <property type="evidence" value="ECO:0000316"/>
    <property type="project" value="FlyBase"/>
</dbReference>
<dbReference type="GO" id="GO:0045944">
    <property type="term" value="P:positive regulation of transcription by RNA polymerase II"/>
    <property type="evidence" value="ECO:0000314"/>
    <property type="project" value="UniProtKB"/>
</dbReference>
<dbReference type="GO" id="GO:1900037">
    <property type="term" value="P:regulation of cellular response to hypoxia"/>
    <property type="evidence" value="ECO:0000314"/>
    <property type="project" value="UniProtKB"/>
</dbReference>
<dbReference type="GO" id="GO:0043467">
    <property type="term" value="P:regulation of generation of precursor metabolites and energy"/>
    <property type="evidence" value="ECO:0000314"/>
    <property type="project" value="UniProtKB"/>
</dbReference>
<dbReference type="InterPro" id="IPR010625">
    <property type="entry name" value="CHCH"/>
</dbReference>
<dbReference type="InterPro" id="IPR055304">
    <property type="entry name" value="CHCHD2/10-like"/>
</dbReference>
<dbReference type="PANTHER" id="PTHR13523">
    <property type="entry name" value="COILED-COIL-HELIX-COILED-COIL-HELIX DOMAIN CONTAINING 2/NUR77"/>
    <property type="match status" value="1"/>
</dbReference>
<dbReference type="PANTHER" id="PTHR13523:SF3">
    <property type="entry name" value="COILED-COIL-HELIX-COILED-COIL-HELIX DOMAIN-CONTAINING PROTEIN 2-RELATED"/>
    <property type="match status" value="1"/>
</dbReference>
<dbReference type="Pfam" id="PF06747">
    <property type="entry name" value="CHCH"/>
    <property type="match status" value="1"/>
</dbReference>
<dbReference type="PROSITE" id="PS51808">
    <property type="entry name" value="CHCH"/>
    <property type="match status" value="1"/>
</dbReference>
<protein>
    <recommendedName>
        <fullName>Coiled-coil-helix-coiled-coil-helix domain-containing protein 2</fullName>
    </recommendedName>
    <alternativeName>
        <fullName>Aging-associated gene 10 protein</fullName>
    </alternativeName>
    <alternativeName>
        <fullName>HCV NS2 trans-regulated protein</fullName>
        <shortName>NS2TP</shortName>
    </alternativeName>
</protein>
<reference key="1">
    <citation type="submission" date="1998-07" db="EMBL/GenBank/DDBJ databases">
        <title>Human 16.7Kd protein, complete cds.</title>
        <authorList>
            <person name="Peng Y."/>
            <person name="Song H."/>
            <person name="Dai M."/>
            <person name="Huang Q."/>
            <person name="Mao Y."/>
            <person name="Zhang Q."/>
            <person name="Mao M."/>
            <person name="Fu G."/>
            <person name="Luo M."/>
            <person name="Chen J."/>
            <person name="Hu R."/>
        </authorList>
    </citation>
    <scope>NUCLEOTIDE SEQUENCE [MRNA]</scope>
    <source>
        <tissue>Pituitary</tissue>
    </source>
</reference>
<reference key="2">
    <citation type="journal article" date="2005" name="Shi Jie Hua Ren Xiao Hua Za Zhi">
        <title>Cloning and identification of gene NS2TP transregulated by non-structural protein 2 of hepatitis C virus.</title>
        <authorList>
            <person name="Zhang L.-Y."/>
            <person name="Cheng J."/>
            <person name="Deng H."/>
            <person name="Liu Y."/>
            <person name="Wang L."/>
        </authorList>
    </citation>
    <scope>NUCLEOTIDE SEQUENCE [MRNA]</scope>
</reference>
<reference key="3">
    <citation type="submission" date="2004-05" db="EMBL/GenBank/DDBJ databases">
        <title>Identification of a human aging-associated gene.</title>
        <authorList>
            <person name="Kim J.W."/>
        </authorList>
    </citation>
    <scope>NUCLEOTIDE SEQUENCE [LARGE SCALE MRNA]</scope>
</reference>
<reference key="4">
    <citation type="journal article" date="2003" name="Nature">
        <title>The DNA sequence of human chromosome 7.</title>
        <authorList>
            <person name="Hillier L.W."/>
            <person name="Fulton R.S."/>
            <person name="Fulton L.A."/>
            <person name="Graves T.A."/>
            <person name="Pepin K.H."/>
            <person name="Wagner-McPherson C."/>
            <person name="Layman D."/>
            <person name="Maas J."/>
            <person name="Jaeger S."/>
            <person name="Walker R."/>
            <person name="Wylie K."/>
            <person name="Sekhon M."/>
            <person name="Becker M.C."/>
            <person name="O'Laughlin M.D."/>
            <person name="Schaller M.E."/>
            <person name="Fewell G.A."/>
            <person name="Delehaunty K.D."/>
            <person name="Miner T.L."/>
            <person name="Nash W.E."/>
            <person name="Cordes M."/>
            <person name="Du H."/>
            <person name="Sun H."/>
            <person name="Edwards J."/>
            <person name="Bradshaw-Cordum H."/>
            <person name="Ali J."/>
            <person name="Andrews S."/>
            <person name="Isak A."/>
            <person name="Vanbrunt A."/>
            <person name="Nguyen C."/>
            <person name="Du F."/>
            <person name="Lamar B."/>
            <person name="Courtney L."/>
            <person name="Kalicki J."/>
            <person name="Ozersky P."/>
            <person name="Bielicki L."/>
            <person name="Scott K."/>
            <person name="Holmes A."/>
            <person name="Harkins R."/>
            <person name="Harris A."/>
            <person name="Strong C.M."/>
            <person name="Hou S."/>
            <person name="Tomlinson C."/>
            <person name="Dauphin-Kohlberg S."/>
            <person name="Kozlowicz-Reilly A."/>
            <person name="Leonard S."/>
            <person name="Rohlfing T."/>
            <person name="Rock S.M."/>
            <person name="Tin-Wollam A.-M."/>
            <person name="Abbott A."/>
            <person name="Minx P."/>
            <person name="Maupin R."/>
            <person name="Strowmatt C."/>
            <person name="Latreille P."/>
            <person name="Miller N."/>
            <person name="Johnson D."/>
            <person name="Murray J."/>
            <person name="Woessner J.P."/>
            <person name="Wendl M.C."/>
            <person name="Yang S.-P."/>
            <person name="Schultz B.R."/>
            <person name="Wallis J.W."/>
            <person name="Spieth J."/>
            <person name="Bieri T.A."/>
            <person name="Nelson J.O."/>
            <person name="Berkowicz N."/>
            <person name="Wohldmann P.E."/>
            <person name="Cook L.L."/>
            <person name="Hickenbotham M.T."/>
            <person name="Eldred J."/>
            <person name="Williams D."/>
            <person name="Bedell J.A."/>
            <person name="Mardis E.R."/>
            <person name="Clifton S.W."/>
            <person name="Chissoe S.L."/>
            <person name="Marra M.A."/>
            <person name="Raymond C."/>
            <person name="Haugen E."/>
            <person name="Gillett W."/>
            <person name="Zhou Y."/>
            <person name="James R."/>
            <person name="Phelps K."/>
            <person name="Iadanoto S."/>
            <person name="Bubb K."/>
            <person name="Simms E."/>
            <person name="Levy R."/>
            <person name="Clendenning J."/>
            <person name="Kaul R."/>
            <person name="Kent W.J."/>
            <person name="Furey T.S."/>
            <person name="Baertsch R.A."/>
            <person name="Brent M.R."/>
            <person name="Keibler E."/>
            <person name="Flicek P."/>
            <person name="Bork P."/>
            <person name="Suyama M."/>
            <person name="Bailey J.A."/>
            <person name="Portnoy M.E."/>
            <person name="Torrents D."/>
            <person name="Chinwalla A.T."/>
            <person name="Gish W.R."/>
            <person name="Eddy S.R."/>
            <person name="McPherson J.D."/>
            <person name="Olson M.V."/>
            <person name="Eichler E.E."/>
            <person name="Green E.D."/>
            <person name="Waterston R.H."/>
            <person name="Wilson R.K."/>
        </authorList>
    </citation>
    <scope>NUCLEOTIDE SEQUENCE [LARGE SCALE GENOMIC DNA]</scope>
</reference>
<reference key="5">
    <citation type="journal article" date="2004" name="Genome Res.">
        <title>The status, quality, and expansion of the NIH full-length cDNA project: the Mammalian Gene Collection (MGC).</title>
        <authorList>
            <consortium name="The MGC Project Team"/>
        </authorList>
    </citation>
    <scope>NUCLEOTIDE SEQUENCE [LARGE SCALE MRNA]</scope>
    <source>
        <tissue>Brain</tissue>
        <tissue>Colon</tissue>
        <tissue>Lung</tissue>
        <tissue>PNS</tissue>
    </source>
</reference>
<reference key="6">
    <citation type="journal article" date="2011" name="BMC Syst. Biol.">
        <title>Initial characterization of the human central proteome.</title>
        <authorList>
            <person name="Burkard T.R."/>
            <person name="Planyavsky M."/>
            <person name="Kaupe I."/>
            <person name="Breitwieser F.P."/>
            <person name="Buerckstuemmer T."/>
            <person name="Bennett K.L."/>
            <person name="Superti-Furga G."/>
            <person name="Colinge J."/>
        </authorList>
    </citation>
    <scope>IDENTIFICATION BY MASS SPECTROMETRY [LARGE SCALE ANALYSIS]</scope>
</reference>
<reference key="7">
    <citation type="journal article" date="2013" name="Nucleic Acids Res.">
        <title>Oxygen-dependent expression of cytochrome c oxidase subunit 4-2 gene expression is mediated by transcription factors RBPJ, CXXC5 and CHCHD2.</title>
        <authorList>
            <person name="Aras S."/>
            <person name="Pak O."/>
            <person name="Sommer N."/>
            <person name="Finley R. Jr."/>
            <person name="Huttemann M."/>
            <person name="Weissmann N."/>
            <person name="Grossman L.I."/>
        </authorList>
    </citation>
    <scope>FUNCTION IN COX4I2 TRANSCRIPTION</scope>
    <scope>INTERACTION WITH RBPJ</scope>
    <scope>SUBCELLULAR LOCATION</scope>
    <scope>INDUCTION BY HYPOXIA</scope>
</reference>
<reference key="8">
    <citation type="journal article" date="2015" name="Lancet Neurol.">
        <title>CHCHD2 mutations in autosomal dominant late-onset Parkinson's disease: a genome-wide linkage and sequencing study.</title>
        <authorList>
            <person name="Funayama M."/>
            <person name="Ohe K."/>
            <person name="Amo T."/>
            <person name="Furuya N."/>
            <person name="Yamaguchi J."/>
            <person name="Saiki S."/>
            <person name="Li Y."/>
            <person name="Ogaki K."/>
            <person name="Ando M."/>
            <person name="Yoshino H."/>
            <person name="Tomiyama H."/>
            <person name="Nishioka K."/>
            <person name="Hasegawa K."/>
            <person name="Saiki H."/>
            <person name="Satake W."/>
            <person name="Mogushi K."/>
            <person name="Sasaki R."/>
            <person name="Kokubo Y."/>
            <person name="Kuzuhara S."/>
            <person name="Toda T."/>
            <person name="Mizuno Y."/>
            <person name="Uchiyama Y."/>
            <person name="Ohno K."/>
            <person name="Hattori N."/>
        </authorList>
    </citation>
    <scope>SUBCELLULAR LOCATION</scope>
    <scope>INVOLVEMENT IN PARK22</scope>
    <scope>VARIANTS PARK22 ILE-61 AND GLN-145</scope>
    <scope>CHARACTERIZATION OF VARIANTS PARK22 ILE-61 AND GLN-145</scope>
</reference>
<reference key="9">
    <citation type="journal article" date="2015" name="Lancet Neurol.">
        <title>CHCHD2 and Parkinson's disease.</title>
        <authorList>
            <person name="Iqbal Z."/>
            <person name="Toft M."/>
        </authorList>
    </citation>
    <scope>CORRESPONDENCE ON INVOLVEMENT OF CHCHD2 IN PARKINSON'S DISEASE</scope>
</reference>
<reference key="10">
    <citation type="journal article" date="2015" name="Proteomics">
        <title>N-terminome analysis of the human mitochondrial proteome.</title>
        <authorList>
            <person name="Vaca Jacome A.S."/>
            <person name="Rabilloud T."/>
            <person name="Schaeffer-Reiss C."/>
            <person name="Rompais M."/>
            <person name="Ayoub D."/>
            <person name="Lane L."/>
            <person name="Bairoch A."/>
            <person name="Van Dorsselaer A."/>
            <person name="Carapito C."/>
        </authorList>
    </citation>
    <scope>IDENTIFICATION BY MASS SPECTROMETRY [LARGE SCALE ANALYSIS]</scope>
</reference>
<reference key="11">
    <citation type="journal article" date="2015" name="Neurology">
        <title>Mitochondrial targeting sequence variants of the CHCHD2 gene are a risk for Lewy body disorders.</title>
        <authorList>
            <person name="Ogaki K."/>
            <person name="Koga S."/>
            <person name="Heckman M.G."/>
            <person name="Fiesel F.C."/>
            <person name="Ando M."/>
            <person name="Labbe C."/>
            <person name="Lorenzo-Betancor O."/>
            <person name="Moussaud-Lamodiere E.L."/>
            <person name="Soto-Ortolaza A.I."/>
            <person name="Walton R.L."/>
            <person name="Strongosky A.J."/>
            <person name="Uitti R.J."/>
            <person name="McCarthy A."/>
            <person name="Lynch T."/>
            <person name="Siuda J."/>
            <person name="Opala G."/>
            <person name="Rudzinska M."/>
            <person name="Krygowska-Wajs A."/>
            <person name="Barcikowska M."/>
            <person name="Czyzewski K."/>
            <person name="Puschmann A."/>
            <person name="Nishioka K."/>
            <person name="Funayama M."/>
            <person name="Hattori N."/>
            <person name="Parisi J.E."/>
            <person name="Petersen R.C."/>
            <person name="Graff-Radford N.R."/>
            <person name="Boeve B.F."/>
            <person name="Springer W."/>
            <person name="Wszolek Z.K."/>
            <person name="Dickson D.W."/>
            <person name="Ross O.A."/>
        </authorList>
    </citation>
    <scope>VARIANTS LEU-2; ARG-4; SER-14; LEU-34; VAL-37; VAL-49 AND VAL-93</scope>
</reference>
<feature type="chain" id="PRO_0000129160" description="Coiled-coil-helix-coiled-coil-helix domain-containing protein 2">
    <location>
        <begin position="1"/>
        <end position="151"/>
    </location>
</feature>
<feature type="domain" description="CHCH" evidence="1">
    <location>
        <begin position="111"/>
        <end position="151"/>
    </location>
</feature>
<feature type="region of interest" description="Disordered" evidence="2">
    <location>
        <begin position="1"/>
        <end position="50"/>
    </location>
</feature>
<feature type="region of interest" description="Disordered" evidence="2">
    <location>
        <begin position="77"/>
        <end position="111"/>
    </location>
</feature>
<feature type="short sequence motif" description="Cx9C motif 1" evidence="1">
    <location>
        <begin position="114"/>
        <end position="124"/>
    </location>
</feature>
<feature type="short sequence motif" description="Cx9C motif 2" evidence="1">
    <location>
        <begin position="134"/>
        <end position="144"/>
    </location>
</feature>
<feature type="compositionally biased region" description="Low complexity" evidence="2">
    <location>
        <begin position="10"/>
        <end position="26"/>
    </location>
</feature>
<feature type="compositionally biased region" description="Pro residues" evidence="2">
    <location>
        <begin position="27"/>
        <end position="38"/>
    </location>
</feature>
<feature type="compositionally biased region" description="Low complexity" evidence="2">
    <location>
        <begin position="39"/>
        <end position="50"/>
    </location>
</feature>
<feature type="compositionally biased region" description="Low complexity" evidence="2">
    <location>
        <begin position="100"/>
        <end position="111"/>
    </location>
</feature>
<feature type="disulfide bond" evidence="1">
    <location>
        <begin position="114"/>
        <end position="144"/>
    </location>
</feature>
<feature type="disulfide bond" evidence="1">
    <location>
        <begin position="124"/>
        <end position="134"/>
    </location>
</feature>
<feature type="sequence variant" id="VAR_076293" description="May influence risk for Lewy body disorders; dbSNP:rs142444896." evidence="6">
    <original>P</original>
    <variation>L</variation>
    <location>
        <position position="2"/>
    </location>
</feature>
<feature type="sequence variant" id="VAR_076294" description="May influence risk for Lewy body disorders; dbSNP:rs778328496." evidence="6">
    <original>G</original>
    <variation>R</variation>
    <location>
        <position position="4"/>
    </location>
</feature>
<feature type="sequence variant" id="VAR_076295" description="May influence risk for Lewy body disorders; dbSNP:rs137965562." evidence="6">
    <original>P</original>
    <variation>S</variation>
    <location>
        <position position="14"/>
    </location>
</feature>
<feature type="sequence variant" id="VAR_076296" description="May influence risk for Lewy body disorders; dbSNP:rs371198317." evidence="6">
    <original>P</original>
    <variation>L</variation>
    <location>
        <position position="34"/>
    </location>
</feature>
<feature type="sequence variant" id="VAR_076297" description="May influence risk for Lewy body disorders; dbSNP:rs1427631250." evidence="6">
    <original>A</original>
    <variation>V</variation>
    <location>
        <position position="37"/>
    </location>
</feature>
<feature type="sequence variant" id="VAR_076298" description="May influence risk for Lewy body disorders; dbSNP:rs151213700." evidence="6">
    <original>A</original>
    <variation>V</variation>
    <location>
        <position position="49"/>
    </location>
</feature>
<feature type="sequence variant" id="VAR_076299" description="In PARK22; does not affect subcellular location; dbSNP:rs864309650." evidence="4">
    <original>T</original>
    <variation>I</variation>
    <location>
        <position position="61"/>
    </location>
</feature>
<feature type="sequence variant" id="VAR_048699" description="In dbSNP:rs11546418.">
    <original>H</original>
    <variation>N</variation>
    <location>
        <position position="78"/>
    </location>
</feature>
<feature type="sequence variant" id="VAR_076300" description="May influence risk for Lewy body disorders; dbSNP:rs748182315." evidence="6">
    <original>A</original>
    <variation>V</variation>
    <location>
        <position position="93"/>
    </location>
</feature>
<feature type="sequence variant" id="VAR_076301" description="In PARK22; uncertain significance; does not affect subcellular location; dbSNP:rs752169833." evidence="4">
    <original>R</original>
    <variation>Q</variation>
    <location>
        <position position="145"/>
    </location>
</feature>
<feature type="sequence conflict" description="In Ref. 5; AAH66331." evidence="7" ref="5">
    <original>G</original>
    <variation>V</variation>
    <location>
        <position position="54"/>
    </location>
</feature>
<organism>
    <name type="scientific">Homo sapiens</name>
    <name type="common">Human</name>
    <dbReference type="NCBI Taxonomy" id="9606"/>
    <lineage>
        <taxon>Eukaryota</taxon>
        <taxon>Metazoa</taxon>
        <taxon>Chordata</taxon>
        <taxon>Craniata</taxon>
        <taxon>Vertebrata</taxon>
        <taxon>Euteleostomi</taxon>
        <taxon>Mammalia</taxon>
        <taxon>Eutheria</taxon>
        <taxon>Euarchontoglires</taxon>
        <taxon>Primates</taxon>
        <taxon>Haplorrhini</taxon>
        <taxon>Catarrhini</taxon>
        <taxon>Hominidae</taxon>
        <taxon>Homo</taxon>
    </lineage>
</organism>
<gene>
    <name type="primary">CHCHD2</name>
    <name type="synonym">C7orf17</name>
    <name type="ORF">AAG10</name>
</gene>
<comment type="function">
    <text evidence="3">Transcription factor. Binds to the oxygen responsive element of COX4I2 and activates its transcription under hypoxia conditions (4% oxygen), as well as normoxia conditions (20% oxygen) (PubMed:23303788).</text>
</comment>
<comment type="subunit">
    <text evidence="3">Interacts with RBPJ.</text>
</comment>
<comment type="interaction">
    <interactant intactId="EBI-2321769">
        <id>Q9Y6H1</id>
    </interactant>
    <interactant intactId="EBI-10173507">
        <id>Q6UY14-3</id>
        <label>ADAMTSL4</label>
    </interactant>
    <organismsDiffer>false</organismsDiffer>
    <experiments>3</experiments>
</comment>
<comment type="interaction">
    <interactant intactId="EBI-2321769">
        <id>Q9Y6H1</id>
    </interactant>
    <interactant intactId="EBI-12015266">
        <id>P18825</id>
        <label>ADRA2C</label>
    </interactant>
    <organismsDiffer>false</organismsDiffer>
    <experiments>3</experiments>
</comment>
<comment type="interaction">
    <interactant intactId="EBI-2321769">
        <id>Q9Y6H1</id>
    </interactant>
    <interactant intactId="EBI-16721660">
        <id>Q8WYQ3</id>
        <label>CHCHD10</label>
    </interactant>
    <organismsDiffer>false</organismsDiffer>
    <experiments>15</experiments>
</comment>
<comment type="interaction">
    <interactant intactId="EBI-2321769">
        <id>Q9Y6H1</id>
    </interactant>
    <interactant intactId="EBI-7043337">
        <id>P05813</id>
        <label>CRYBA1</label>
    </interactant>
    <organismsDiffer>false</organismsDiffer>
    <experiments>3</experiments>
</comment>
<comment type="interaction">
    <interactant intactId="EBI-2321769">
        <id>Q9Y6H1</id>
    </interactant>
    <interactant intactId="EBI-1188472">
        <id>P78358</id>
        <label>CTAG1B</label>
    </interactant>
    <organismsDiffer>false</organismsDiffer>
    <experiments>3</experiments>
</comment>
<comment type="interaction">
    <interactant intactId="EBI-2321769">
        <id>Q9Y6H1</id>
    </interactant>
    <interactant intactId="EBI-3867333">
        <id>A8MQ03</id>
        <label>CYSRT1</label>
    </interactant>
    <organismsDiffer>false</organismsDiffer>
    <experiments>3</experiments>
</comment>
<comment type="interaction">
    <interactant intactId="EBI-2321769">
        <id>Q9Y6H1</id>
    </interactant>
    <interactant intactId="EBI-10174566">
        <id>A2ABF9</id>
        <label>EHMT2</label>
    </interactant>
    <organismsDiffer>false</organismsDiffer>
    <experiments>3</experiments>
</comment>
<comment type="interaction">
    <interactant intactId="EBI-2321769">
        <id>Q9Y6H1</id>
    </interactant>
    <interactant intactId="EBI-618309">
        <id>Q08379</id>
        <label>GOLGA2</label>
    </interactant>
    <organismsDiffer>false</organismsDiffer>
    <experiments>6</experiments>
</comment>
<comment type="interaction">
    <interactant intactId="EBI-2321769">
        <id>Q9Y6H1</id>
    </interactant>
    <interactant intactId="EBI-466029">
        <id>P42858</id>
        <label>HTT</label>
    </interactant>
    <organismsDiffer>false</organismsDiffer>
    <experiments>10</experiments>
</comment>
<comment type="interaction">
    <interactant intactId="EBI-2321769">
        <id>Q9Y6H1</id>
    </interactant>
    <interactant intactId="EBI-747204">
        <id>Q9UKT9</id>
        <label>IKZF3</label>
    </interactant>
    <organismsDiffer>false</organismsDiffer>
    <experiments>4</experiments>
</comment>
<comment type="interaction">
    <interactant intactId="EBI-2321769">
        <id>Q9Y6H1</id>
    </interactant>
    <interactant intactId="EBI-6509505">
        <id>Q0VD86</id>
        <label>INCA1</label>
    </interactant>
    <organismsDiffer>false</organismsDiffer>
    <experiments>3</experiments>
</comment>
<comment type="interaction">
    <interactant intactId="EBI-2321769">
        <id>Q9Y6H1</id>
    </interactant>
    <interactant intactId="EBI-948001">
        <id>Q15323</id>
        <label>KRT31</label>
    </interactant>
    <organismsDiffer>false</organismsDiffer>
    <experiments>3</experiments>
</comment>
<comment type="interaction">
    <interactant intactId="EBI-2321769">
        <id>Q9Y6H1</id>
    </interactant>
    <interactant intactId="EBI-10171697">
        <id>Q6A162</id>
        <label>KRT40</label>
    </interactant>
    <organismsDiffer>false</organismsDiffer>
    <experiments>3</experiments>
</comment>
<comment type="interaction">
    <interactant intactId="EBI-2321769">
        <id>Q9Y6H1</id>
    </interactant>
    <interactant intactId="EBI-2865388">
        <id>Q969G2</id>
        <label>LHX4</label>
    </interactant>
    <organismsDiffer>false</organismsDiffer>
    <experiments>4</experiments>
</comment>
<comment type="interaction">
    <interactant intactId="EBI-2321769">
        <id>Q9Y6H1</id>
    </interactant>
    <interactant intactId="EBI-9118295">
        <id>A9UHW6-2</id>
        <label>MIF4GD</label>
    </interactant>
    <organismsDiffer>false</organismsDiffer>
    <experiments>3</experiments>
</comment>
<comment type="interaction">
    <interactant intactId="EBI-2321769">
        <id>Q9Y6H1</id>
    </interactant>
    <interactant intactId="EBI-536879">
        <id>O43482</id>
        <label>OIP5</label>
    </interactant>
    <organismsDiffer>false</organismsDiffer>
    <experiments>3</experiments>
</comment>
<comment type="interaction">
    <interactant intactId="EBI-2321769">
        <id>Q9Y6H1</id>
    </interactant>
    <interactant intactId="EBI-395883">
        <id>P07237</id>
        <label>P4HB</label>
    </interactant>
    <organismsDiffer>false</organismsDiffer>
    <experiments>3</experiments>
</comment>
<comment type="interaction">
    <interactant intactId="EBI-2321769">
        <id>Q9Y6H1</id>
    </interactant>
    <interactant intactId="EBI-10302990">
        <id>Q9BYU1</id>
        <label>PBX4</label>
    </interactant>
    <organismsDiffer>false</organismsDiffer>
    <experiments>3</experiments>
</comment>
<comment type="interaction">
    <interactant intactId="EBI-2321769">
        <id>Q9Y6H1</id>
    </interactant>
    <interactant intactId="EBI-742388">
        <id>Q9H8W4</id>
        <label>PLEKHF2</label>
    </interactant>
    <organismsDiffer>false</organismsDiffer>
    <experiments>3</experiments>
</comment>
<comment type="interaction">
    <interactant intactId="EBI-2321769">
        <id>Q9Y6H1</id>
    </interactant>
    <interactant intactId="EBI-713000">
        <id>Q9Y2S7</id>
        <label>POLDIP2</label>
    </interactant>
    <organismsDiffer>false</organismsDiffer>
    <experiments>8</experiments>
</comment>
<comment type="interaction">
    <interactant intactId="EBI-2321769">
        <id>Q9Y6H1</id>
    </interactant>
    <interactant intactId="EBI-307352">
        <id>Q04864</id>
        <label>REL</label>
    </interactant>
    <organismsDiffer>false</organismsDiffer>
    <experiments>3</experiments>
</comment>
<comment type="interaction">
    <interactant intactId="EBI-2321769">
        <id>Q9Y6H1</id>
    </interactant>
    <interactant intactId="EBI-533224">
        <id>P15884</id>
        <label>TCF4</label>
    </interactant>
    <organismsDiffer>false</organismsDiffer>
    <experiments>3</experiments>
</comment>
<comment type="interaction">
    <interactant intactId="EBI-2321769">
        <id>Q9Y6H1</id>
    </interactant>
    <interactant intactId="EBI-355744">
        <id>Q12933</id>
        <label>TRAF2</label>
    </interactant>
    <organismsDiffer>false</organismsDiffer>
    <experiments>3</experiments>
</comment>
<comment type="interaction">
    <interactant intactId="EBI-2321769">
        <id>Q9Y6H1</id>
    </interactant>
    <interactant intactId="EBI-5235829">
        <id>Q8IWZ5</id>
        <label>TRIM42</label>
    </interactant>
    <organismsDiffer>false</organismsDiffer>
    <experiments>3</experiments>
</comment>
<comment type="interaction">
    <interactant intactId="EBI-2321769">
        <id>Q9Y6H1</id>
    </interactant>
    <interactant intactId="EBI-2130429">
        <id>Q9BYV2</id>
        <label>TRIM54</label>
    </interactant>
    <organismsDiffer>false</organismsDiffer>
    <experiments>3</experiments>
</comment>
<comment type="interaction">
    <interactant intactId="EBI-2321769">
        <id>Q9Y6H1</id>
    </interactant>
    <interactant intactId="EBI-12806590">
        <id>Q86WV8</id>
        <label>TSC1</label>
    </interactant>
    <organismsDiffer>false</organismsDiffer>
    <experiments>3</experiments>
</comment>
<comment type="interaction">
    <interactant intactId="EBI-2321769">
        <id>Q9Y6H1</id>
    </interactant>
    <interactant intactId="EBI-11975223">
        <id>Q70EL1-9</id>
        <label>USP54</label>
    </interactant>
    <organismsDiffer>false</organismsDiffer>
    <experiments>3</experiments>
</comment>
<comment type="interaction">
    <interactant intactId="EBI-2321769">
        <id>Q9Y6H1</id>
    </interactant>
    <interactant intactId="EBI-12030590">
        <id>Q9H0C1</id>
        <label>ZMYND12</label>
    </interactant>
    <organismsDiffer>false</organismsDiffer>
    <experiments>3</experiments>
</comment>
<comment type="interaction">
    <interactant intactId="EBI-2321769">
        <id>Q9Y6H1</id>
    </interactant>
    <interactant intactId="EBI-11478341">
        <id>PRO_0000041302</id>
        <dbReference type="UniProtKB" id="P08563"/>
    </interactant>
    <organismsDiffer>true</organismsDiffer>
    <experiments>3</experiments>
</comment>
<comment type="subcellular location">
    <subcellularLocation>
        <location evidence="3">Nucleus</location>
    </subcellularLocation>
    <subcellularLocation>
        <location evidence="4">Mitochondrion</location>
    </subcellularLocation>
    <subcellularLocation>
        <location evidence="4">Mitochondrion intermembrane space</location>
    </subcellularLocation>
    <text evidence="4">Mainly localized in the intermembrane space.</text>
</comment>
<comment type="induction">
    <text evidence="3">Up-regulated by hypoxia (4% oxygen) (at protein level).</text>
</comment>
<comment type="polymorphism">
    <text evidence="5 6">Mutations in CHCHD2 are rare, and might vary by ethnic origin.</text>
</comment>
<comment type="disease" evidence="4">
    <disease id="DI-04601">
        <name>Parkinson disease 22</name>
        <acronym>PARK22</acronym>
        <description>An autosomal dominant form of Parkinson disease, a complex neurodegenerative disorder characterized by bradykinesia, resting tremor, muscular rigidity and postural instability, as well as by a clinically significant response to treatment with levodopa. The pathology involves the loss of dopaminergic neurons in the substantia nigra and the presence of Lewy bodies (intraneuronal accumulations of aggregated proteins), in surviving neurons in various areas of the brain.</description>
        <dbReference type="MIM" id="616710"/>
    </disease>
    <text>The gene represented in this entry may be involved in disease pathogenesis.</text>
</comment>
<sequence length="151" mass="15513">MPRGSRSRTSRMAPPASRAPQMRAAPRPAPVAQPPAAAPPSAVGSSAAAPRQPGLMAQMATTAAGVAVGSAVGHTLGHAITGGFSGGSNAEPARPDITYQEPQGTQPAQQQQPCLYEIKQFLECAQNQGDIKLCEGFNEVLKQCRLANGLA</sequence>
<name>CHCH2_HUMAN</name>